<feature type="chain" id="PRO_1000139268" description="Cyclic pyranopterin monophosphate synthase">
    <location>
        <begin position="1"/>
        <end position="161"/>
    </location>
</feature>
<feature type="active site" evidence="1">
    <location>
        <position position="128"/>
    </location>
</feature>
<feature type="binding site" evidence="1">
    <location>
        <begin position="75"/>
        <end position="77"/>
    </location>
    <ligand>
        <name>substrate</name>
    </ligand>
</feature>
<feature type="binding site" evidence="1">
    <location>
        <begin position="113"/>
        <end position="114"/>
    </location>
    <ligand>
        <name>substrate</name>
    </ligand>
</feature>
<name>MOAC_ERWT9</name>
<protein>
    <recommendedName>
        <fullName evidence="1">Cyclic pyranopterin monophosphate synthase</fullName>
        <ecNumber evidence="1">4.6.1.17</ecNumber>
    </recommendedName>
    <alternativeName>
        <fullName evidence="1">Molybdenum cofactor biosynthesis protein C</fullName>
    </alternativeName>
</protein>
<gene>
    <name evidence="1" type="primary">moaC</name>
    <name type="ordered locus">ETA_22570</name>
</gene>
<sequence>MSQLTHINAAGEAHMVDVSTKQESVREARAQAFVVMLPQTLQMIIDGSHHKGDVFATARIAGIQAAKRTWELIPLCHPLLLSKVEVTLVAEPAHHRVRIESLCRLSGKTGVEMEALTAASVAALTIYDMCKAVQKDIVIEQCRLLSKSGGKSGDFQAVAND</sequence>
<reference key="1">
    <citation type="journal article" date="2008" name="Environ. Microbiol.">
        <title>The genome of Erwinia tasmaniensis strain Et1/99, a non-pathogenic bacterium in the genus Erwinia.</title>
        <authorList>
            <person name="Kube M."/>
            <person name="Migdoll A.M."/>
            <person name="Mueller I."/>
            <person name="Kuhl H."/>
            <person name="Beck A."/>
            <person name="Reinhardt R."/>
            <person name="Geider K."/>
        </authorList>
    </citation>
    <scope>NUCLEOTIDE SEQUENCE [LARGE SCALE GENOMIC DNA]</scope>
    <source>
        <strain>DSM 17950 / CFBP 7177 / CIP 109463 / NCPPB 4357 / Et1/99</strain>
    </source>
</reference>
<proteinExistence type="inferred from homology"/>
<comment type="function">
    <text evidence="1">Catalyzes the conversion of (8S)-3',8-cyclo-7,8-dihydroguanosine 5'-triphosphate to cyclic pyranopterin monophosphate (cPMP).</text>
</comment>
<comment type="catalytic activity">
    <reaction evidence="1">
        <text>(8S)-3',8-cyclo-7,8-dihydroguanosine 5'-triphosphate = cyclic pyranopterin phosphate + diphosphate</text>
        <dbReference type="Rhea" id="RHEA:49580"/>
        <dbReference type="ChEBI" id="CHEBI:33019"/>
        <dbReference type="ChEBI" id="CHEBI:59648"/>
        <dbReference type="ChEBI" id="CHEBI:131766"/>
        <dbReference type="EC" id="4.6.1.17"/>
    </reaction>
</comment>
<comment type="pathway">
    <text evidence="1">Cofactor biosynthesis; molybdopterin biosynthesis.</text>
</comment>
<comment type="subunit">
    <text evidence="1">Homohexamer; trimer of dimers.</text>
</comment>
<comment type="similarity">
    <text evidence="1">Belongs to the MoaC family.</text>
</comment>
<evidence type="ECO:0000255" key="1">
    <source>
        <dbReference type="HAMAP-Rule" id="MF_01224"/>
    </source>
</evidence>
<organism>
    <name type="scientific">Erwinia tasmaniensis (strain DSM 17950 / CFBP 7177 / CIP 109463 / NCPPB 4357 / Et1/99)</name>
    <dbReference type="NCBI Taxonomy" id="465817"/>
    <lineage>
        <taxon>Bacteria</taxon>
        <taxon>Pseudomonadati</taxon>
        <taxon>Pseudomonadota</taxon>
        <taxon>Gammaproteobacteria</taxon>
        <taxon>Enterobacterales</taxon>
        <taxon>Erwiniaceae</taxon>
        <taxon>Erwinia</taxon>
    </lineage>
</organism>
<accession>B2VBW5</accession>
<keyword id="KW-0456">Lyase</keyword>
<keyword id="KW-0501">Molybdenum cofactor biosynthesis</keyword>
<keyword id="KW-1185">Reference proteome</keyword>
<dbReference type="EC" id="4.6.1.17" evidence="1"/>
<dbReference type="EMBL" id="CU468135">
    <property type="protein sequence ID" value="CAO97303.1"/>
    <property type="molecule type" value="Genomic_DNA"/>
</dbReference>
<dbReference type="RefSeq" id="WP_012441972.1">
    <property type="nucleotide sequence ID" value="NC_010694.1"/>
</dbReference>
<dbReference type="SMR" id="B2VBW5"/>
<dbReference type="STRING" id="465817.ETA_22570"/>
<dbReference type="KEGG" id="eta:ETA_22570"/>
<dbReference type="eggNOG" id="COG0315">
    <property type="taxonomic scope" value="Bacteria"/>
</dbReference>
<dbReference type="HOGENOM" id="CLU_074693_1_1_6"/>
<dbReference type="OrthoDB" id="9794429at2"/>
<dbReference type="UniPathway" id="UPA00344"/>
<dbReference type="Proteomes" id="UP000001726">
    <property type="component" value="Chromosome"/>
</dbReference>
<dbReference type="GO" id="GO:0061799">
    <property type="term" value="F:cyclic pyranopterin monophosphate synthase activity"/>
    <property type="evidence" value="ECO:0007669"/>
    <property type="project" value="UniProtKB-UniRule"/>
</dbReference>
<dbReference type="GO" id="GO:0061798">
    <property type="term" value="F:GTP 3',8'-cyclase activity"/>
    <property type="evidence" value="ECO:0007669"/>
    <property type="project" value="TreeGrafter"/>
</dbReference>
<dbReference type="GO" id="GO:0006777">
    <property type="term" value="P:Mo-molybdopterin cofactor biosynthetic process"/>
    <property type="evidence" value="ECO:0007669"/>
    <property type="project" value="UniProtKB-UniRule"/>
</dbReference>
<dbReference type="CDD" id="cd01420">
    <property type="entry name" value="MoaC_PE"/>
    <property type="match status" value="1"/>
</dbReference>
<dbReference type="FunFam" id="3.30.70.640:FF:000001">
    <property type="entry name" value="Cyclic pyranopterin monophosphate synthase"/>
    <property type="match status" value="1"/>
</dbReference>
<dbReference type="Gene3D" id="3.30.70.640">
    <property type="entry name" value="Molybdopterin cofactor biosynthesis C (MoaC) domain"/>
    <property type="match status" value="1"/>
</dbReference>
<dbReference type="HAMAP" id="MF_01224_B">
    <property type="entry name" value="MoaC_B"/>
    <property type="match status" value="1"/>
</dbReference>
<dbReference type="InterPro" id="IPR023045">
    <property type="entry name" value="MoaC"/>
</dbReference>
<dbReference type="InterPro" id="IPR047594">
    <property type="entry name" value="MoaC_bact/euk"/>
</dbReference>
<dbReference type="InterPro" id="IPR036522">
    <property type="entry name" value="MoaC_sf"/>
</dbReference>
<dbReference type="InterPro" id="IPR050105">
    <property type="entry name" value="MoCo_biosynth_MoaA/MoaC"/>
</dbReference>
<dbReference type="InterPro" id="IPR002820">
    <property type="entry name" value="Mopterin_CF_biosynth-C_dom"/>
</dbReference>
<dbReference type="NCBIfam" id="TIGR00581">
    <property type="entry name" value="moaC"/>
    <property type="match status" value="1"/>
</dbReference>
<dbReference type="NCBIfam" id="NF006870">
    <property type="entry name" value="PRK09364.1"/>
    <property type="match status" value="1"/>
</dbReference>
<dbReference type="PANTHER" id="PTHR22960:SF0">
    <property type="entry name" value="MOLYBDENUM COFACTOR BIOSYNTHESIS PROTEIN 1"/>
    <property type="match status" value="1"/>
</dbReference>
<dbReference type="PANTHER" id="PTHR22960">
    <property type="entry name" value="MOLYBDOPTERIN COFACTOR SYNTHESIS PROTEIN A"/>
    <property type="match status" value="1"/>
</dbReference>
<dbReference type="Pfam" id="PF01967">
    <property type="entry name" value="MoaC"/>
    <property type="match status" value="1"/>
</dbReference>
<dbReference type="SUPFAM" id="SSF55040">
    <property type="entry name" value="Molybdenum cofactor biosynthesis protein C, MoaC"/>
    <property type="match status" value="1"/>
</dbReference>